<sequence>MSEEKNEKAYEKIDEISSSLGLKDDERTIFEIVPTQNPNEHVLSLKSGSWDGVEPWFGIDEHQNLHTMVSIKSLSALIEAYRAAQKENFDLRLEKTIWQNVPVDFSDVWVVAMDEIKKIAAEQKNKNFNIDLDQLVKNIKKEHPNLFVNIKEMMQFARSRAND</sequence>
<accession>A7GZL7</accession>
<comment type="similarity">
    <text evidence="1">Belongs to the UPF0763 family.</text>
</comment>
<comment type="sequence caution" evidence="2">
    <conflict type="erroneous initiation">
        <sequence resource="EMBL-CDS" id="EAU01235"/>
    </conflict>
    <text>Extended N-terminus.</text>
</comment>
<reference key="1">
    <citation type="submission" date="2007-07" db="EMBL/GenBank/DDBJ databases">
        <title>Genome sequence of Campylobacter curvus 525.92 isolated from human feces.</title>
        <authorList>
            <person name="Fouts D.E."/>
            <person name="Mongodin E.F."/>
            <person name="Puiu D."/>
            <person name="Sebastian Y."/>
            <person name="Miller W.G."/>
            <person name="Mandrell R.E."/>
            <person name="Lastovica A.J."/>
            <person name="Nelson K.E."/>
        </authorList>
    </citation>
    <scope>NUCLEOTIDE SEQUENCE [LARGE SCALE GENOMIC DNA]</scope>
    <source>
        <strain>525.92</strain>
    </source>
</reference>
<proteinExistence type="inferred from homology"/>
<evidence type="ECO:0000255" key="1">
    <source>
        <dbReference type="HAMAP-Rule" id="MF_02110"/>
    </source>
</evidence>
<evidence type="ECO:0000305" key="2"/>
<organism>
    <name type="scientific">Campylobacter curvus (strain 525.92)</name>
    <dbReference type="NCBI Taxonomy" id="360105"/>
    <lineage>
        <taxon>Bacteria</taxon>
        <taxon>Pseudomonadati</taxon>
        <taxon>Campylobacterota</taxon>
        <taxon>Epsilonproteobacteria</taxon>
        <taxon>Campylobacterales</taxon>
        <taxon>Campylobacteraceae</taxon>
        <taxon>Campylobacter</taxon>
    </lineage>
</organism>
<dbReference type="EMBL" id="CP000767">
    <property type="protein sequence ID" value="EAU01235.1"/>
    <property type="status" value="ALT_INIT"/>
    <property type="molecule type" value="Genomic_DNA"/>
</dbReference>
<dbReference type="RefSeq" id="WP_034966229.1">
    <property type="nucleotide sequence ID" value="NC_009715.2"/>
</dbReference>
<dbReference type="STRING" id="360105.CCV52592_0158"/>
<dbReference type="KEGG" id="ccv:CCV52592_0158"/>
<dbReference type="HOGENOM" id="CLU_120359_1_0_7"/>
<dbReference type="Proteomes" id="UP000006380">
    <property type="component" value="Chromosome"/>
</dbReference>
<dbReference type="HAMAP" id="MF_02110">
    <property type="entry name" value="UPF0763"/>
    <property type="match status" value="1"/>
</dbReference>
<dbReference type="InterPro" id="IPR019724">
    <property type="entry name" value="UPF0763"/>
</dbReference>
<dbReference type="Pfam" id="PF10788">
    <property type="entry name" value="DUF2603"/>
    <property type="match status" value="1"/>
</dbReference>
<feature type="chain" id="PRO_0000394775" description="UPF0763 protein Ccur92_13550">
    <location>
        <begin position="1"/>
        <end position="163"/>
    </location>
</feature>
<protein>
    <recommendedName>
        <fullName evidence="1">UPF0763 protein Ccur92_13550</fullName>
    </recommendedName>
</protein>
<gene>
    <name type="ordered locus">Ccur92_13550</name>
    <name type="ORF">CCV52592_0158</name>
</gene>
<name>Y1355_CAMC5</name>
<keyword id="KW-1185">Reference proteome</keyword>